<comment type="function">
    <text evidence="1">This protein is one of the early assembly proteins of the 50S ribosomal subunit, although it is not seen to bind rRNA by itself. It is important during the early stages of 50S assembly.</text>
</comment>
<comment type="subunit">
    <text evidence="1">Part of the 50S ribosomal subunit.</text>
</comment>
<comment type="similarity">
    <text evidence="1">Belongs to the universal ribosomal protein uL13 family.</text>
</comment>
<protein>
    <recommendedName>
        <fullName evidence="1">Large ribosomal subunit protein uL13</fullName>
    </recommendedName>
    <alternativeName>
        <fullName evidence="2">50S ribosomal protein L13</fullName>
    </alternativeName>
</protein>
<organism>
    <name type="scientific">Pseudomonas syringae pv. syringae (strain B728a)</name>
    <dbReference type="NCBI Taxonomy" id="205918"/>
    <lineage>
        <taxon>Bacteria</taxon>
        <taxon>Pseudomonadati</taxon>
        <taxon>Pseudomonadota</taxon>
        <taxon>Gammaproteobacteria</taxon>
        <taxon>Pseudomonadales</taxon>
        <taxon>Pseudomonadaceae</taxon>
        <taxon>Pseudomonas</taxon>
        <taxon>Pseudomonas syringae</taxon>
    </lineage>
</organism>
<accession>Q4ZNX2</accession>
<gene>
    <name evidence="1" type="primary">rplM</name>
    <name type="ordered locus">Psyr_4120</name>
</gene>
<dbReference type="EMBL" id="CP000075">
    <property type="protein sequence ID" value="AAY39150.1"/>
    <property type="molecule type" value="Genomic_DNA"/>
</dbReference>
<dbReference type="RefSeq" id="WP_002555065.1">
    <property type="nucleotide sequence ID" value="NC_007005.1"/>
</dbReference>
<dbReference type="RefSeq" id="YP_237188.1">
    <property type="nucleotide sequence ID" value="NC_007005.1"/>
</dbReference>
<dbReference type="SMR" id="Q4ZNX2"/>
<dbReference type="STRING" id="205918.Psyr_4120"/>
<dbReference type="GeneID" id="96220600"/>
<dbReference type="KEGG" id="psb:Psyr_4120"/>
<dbReference type="PATRIC" id="fig|205918.7.peg.4238"/>
<dbReference type="eggNOG" id="COG0102">
    <property type="taxonomic scope" value="Bacteria"/>
</dbReference>
<dbReference type="HOGENOM" id="CLU_082184_2_2_6"/>
<dbReference type="OrthoDB" id="9801330at2"/>
<dbReference type="Proteomes" id="UP000000426">
    <property type="component" value="Chromosome"/>
</dbReference>
<dbReference type="GO" id="GO:0022625">
    <property type="term" value="C:cytosolic large ribosomal subunit"/>
    <property type="evidence" value="ECO:0007669"/>
    <property type="project" value="TreeGrafter"/>
</dbReference>
<dbReference type="GO" id="GO:0003729">
    <property type="term" value="F:mRNA binding"/>
    <property type="evidence" value="ECO:0007669"/>
    <property type="project" value="TreeGrafter"/>
</dbReference>
<dbReference type="GO" id="GO:0003735">
    <property type="term" value="F:structural constituent of ribosome"/>
    <property type="evidence" value="ECO:0007669"/>
    <property type="project" value="InterPro"/>
</dbReference>
<dbReference type="GO" id="GO:0017148">
    <property type="term" value="P:negative regulation of translation"/>
    <property type="evidence" value="ECO:0007669"/>
    <property type="project" value="TreeGrafter"/>
</dbReference>
<dbReference type="GO" id="GO:0006412">
    <property type="term" value="P:translation"/>
    <property type="evidence" value="ECO:0007669"/>
    <property type="project" value="UniProtKB-UniRule"/>
</dbReference>
<dbReference type="CDD" id="cd00392">
    <property type="entry name" value="Ribosomal_L13"/>
    <property type="match status" value="1"/>
</dbReference>
<dbReference type="FunFam" id="3.90.1180.10:FF:000001">
    <property type="entry name" value="50S ribosomal protein L13"/>
    <property type="match status" value="1"/>
</dbReference>
<dbReference type="Gene3D" id="3.90.1180.10">
    <property type="entry name" value="Ribosomal protein L13"/>
    <property type="match status" value="1"/>
</dbReference>
<dbReference type="HAMAP" id="MF_01366">
    <property type="entry name" value="Ribosomal_uL13"/>
    <property type="match status" value="1"/>
</dbReference>
<dbReference type="InterPro" id="IPR005822">
    <property type="entry name" value="Ribosomal_uL13"/>
</dbReference>
<dbReference type="InterPro" id="IPR005823">
    <property type="entry name" value="Ribosomal_uL13_bac-type"/>
</dbReference>
<dbReference type="InterPro" id="IPR023563">
    <property type="entry name" value="Ribosomal_uL13_CS"/>
</dbReference>
<dbReference type="InterPro" id="IPR036899">
    <property type="entry name" value="Ribosomal_uL13_sf"/>
</dbReference>
<dbReference type="NCBIfam" id="TIGR01066">
    <property type="entry name" value="rplM_bact"/>
    <property type="match status" value="1"/>
</dbReference>
<dbReference type="PANTHER" id="PTHR11545:SF2">
    <property type="entry name" value="LARGE RIBOSOMAL SUBUNIT PROTEIN UL13M"/>
    <property type="match status" value="1"/>
</dbReference>
<dbReference type="PANTHER" id="PTHR11545">
    <property type="entry name" value="RIBOSOMAL PROTEIN L13"/>
    <property type="match status" value="1"/>
</dbReference>
<dbReference type="Pfam" id="PF00572">
    <property type="entry name" value="Ribosomal_L13"/>
    <property type="match status" value="1"/>
</dbReference>
<dbReference type="PIRSF" id="PIRSF002181">
    <property type="entry name" value="Ribosomal_L13"/>
    <property type="match status" value="1"/>
</dbReference>
<dbReference type="SUPFAM" id="SSF52161">
    <property type="entry name" value="Ribosomal protein L13"/>
    <property type="match status" value="1"/>
</dbReference>
<dbReference type="PROSITE" id="PS00783">
    <property type="entry name" value="RIBOSOMAL_L13"/>
    <property type="match status" value="1"/>
</dbReference>
<name>RL13_PSEU2</name>
<evidence type="ECO:0000255" key="1">
    <source>
        <dbReference type="HAMAP-Rule" id="MF_01366"/>
    </source>
</evidence>
<evidence type="ECO:0000305" key="2"/>
<keyword id="KW-0687">Ribonucleoprotein</keyword>
<keyword id="KW-0689">Ribosomal protein</keyword>
<feature type="chain" id="PRO_0000261774" description="Large ribosomal subunit protein uL13">
    <location>
        <begin position="1"/>
        <end position="142"/>
    </location>
</feature>
<proteinExistence type="inferred from homology"/>
<sequence length="142" mass="15878">MKTFTAKPETVKRDWFVVDAAGQTLGRLATEIASRLRGKHKPEYTPHVDTGDYIVVINAEQIRVTGAKTTDKIYYSHSGFPGGIKSINFEKLIAKAPERVIETAVKGMLPKNPLGRDMYRKLKVYAGAVHPHTAQQPQELKF</sequence>
<reference key="1">
    <citation type="journal article" date="2005" name="Proc. Natl. Acad. Sci. U.S.A.">
        <title>Comparison of the complete genome sequences of Pseudomonas syringae pv. syringae B728a and pv. tomato DC3000.</title>
        <authorList>
            <person name="Feil H."/>
            <person name="Feil W.S."/>
            <person name="Chain P."/>
            <person name="Larimer F."/>
            <person name="Dibartolo G."/>
            <person name="Copeland A."/>
            <person name="Lykidis A."/>
            <person name="Trong S."/>
            <person name="Nolan M."/>
            <person name="Goltsman E."/>
            <person name="Thiel J."/>
            <person name="Malfatti S."/>
            <person name="Loper J.E."/>
            <person name="Lapidus A."/>
            <person name="Detter J.C."/>
            <person name="Land M."/>
            <person name="Richardson P.M."/>
            <person name="Kyrpides N.C."/>
            <person name="Ivanova N."/>
            <person name="Lindow S.E."/>
        </authorList>
    </citation>
    <scope>NUCLEOTIDE SEQUENCE [LARGE SCALE GENOMIC DNA]</scope>
    <source>
        <strain>B728a</strain>
    </source>
</reference>